<dbReference type="EC" id="5.6.2.1" evidence="5"/>
<dbReference type="EMBL" id="X96762">
    <property type="protein sequence ID" value="CAA65537.1"/>
    <property type="molecule type" value="mRNA"/>
</dbReference>
<dbReference type="EMBL" id="Z93385">
    <property type="protein sequence ID" value="CAB07639.1"/>
    <property type="molecule type" value="Genomic_DNA"/>
</dbReference>
<dbReference type="EMBL" id="Z93385">
    <property type="protein sequence ID" value="CAB07640.1"/>
    <property type="molecule type" value="Genomic_DNA"/>
</dbReference>
<dbReference type="PIR" id="S65469">
    <property type="entry name" value="S65469"/>
</dbReference>
<dbReference type="PIR" id="T23647">
    <property type="entry name" value="T23647"/>
</dbReference>
<dbReference type="PIR" id="T23648">
    <property type="entry name" value="T23648"/>
</dbReference>
<dbReference type="RefSeq" id="NP_001021578.1">
    <property type="nucleotide sequence ID" value="NM_001026407.5"/>
</dbReference>
<dbReference type="RefSeq" id="NP_001379240.1">
    <molecule id="O17966-2"/>
    <property type="nucleotide sequence ID" value="NM_001392963.1"/>
</dbReference>
<dbReference type="RefSeq" id="NP_493337.1">
    <molecule id="O17966-1"/>
    <property type="nucleotide sequence ID" value="NM_060936.8"/>
</dbReference>
<dbReference type="SMR" id="O17966"/>
<dbReference type="BioGRID" id="57335">
    <property type="interactions" value="14"/>
</dbReference>
<dbReference type="FunCoup" id="O17966">
    <property type="interactions" value="2129"/>
</dbReference>
<dbReference type="STRING" id="6239.M01E5.5a.2"/>
<dbReference type="PaxDb" id="6239-M01E5.5a"/>
<dbReference type="PeptideAtlas" id="O17966"/>
<dbReference type="EnsemblMetazoa" id="M01E5.5a.1">
    <molecule id="O17966-1"/>
    <property type="protein sequence ID" value="M01E5.5a.1"/>
    <property type="gene ID" value="WBGene00006595"/>
</dbReference>
<dbReference type="EnsemblMetazoa" id="M01E5.5b.1">
    <molecule id="O17966-2"/>
    <property type="protein sequence ID" value="M01E5.5b.1"/>
    <property type="gene ID" value="WBGene00006595"/>
</dbReference>
<dbReference type="GeneID" id="266847"/>
<dbReference type="KEGG" id="cel:CELE_M01E5.5"/>
<dbReference type="UCSC" id="M01E5.5b">
    <molecule id="O17966-1"/>
    <property type="organism name" value="c. elegans"/>
</dbReference>
<dbReference type="AGR" id="WB:WBGene00006595"/>
<dbReference type="CTD" id="266847"/>
<dbReference type="WormBase" id="M01E5.5a">
    <molecule id="O17966-1"/>
    <property type="protein sequence ID" value="CE12282"/>
    <property type="gene ID" value="WBGene00006595"/>
    <property type="gene designation" value="top-1"/>
</dbReference>
<dbReference type="WormBase" id="M01E5.5b">
    <molecule id="O17966-2"/>
    <property type="protein sequence ID" value="CE12284"/>
    <property type="gene ID" value="WBGene00006595"/>
    <property type="gene designation" value="top-1"/>
</dbReference>
<dbReference type="eggNOG" id="KOG0981">
    <property type="taxonomic scope" value="Eukaryota"/>
</dbReference>
<dbReference type="GeneTree" id="ENSGT00940000167650"/>
<dbReference type="HOGENOM" id="CLU_009193_0_1_1"/>
<dbReference type="InParanoid" id="O17966"/>
<dbReference type="OMA" id="HRWKEVK"/>
<dbReference type="OrthoDB" id="47179at2759"/>
<dbReference type="PhylomeDB" id="O17966"/>
<dbReference type="Reactome" id="R-CEL-4615885">
    <property type="pathway name" value="SUMOylation of DNA replication proteins"/>
</dbReference>
<dbReference type="PRO" id="PR:O17966"/>
<dbReference type="Proteomes" id="UP000001940">
    <property type="component" value="Chromosome I"/>
</dbReference>
<dbReference type="Bgee" id="WBGene00006595">
    <property type="expression patterns" value="Expressed in germ line (C elegans) and 5 other cell types or tissues"/>
</dbReference>
<dbReference type="GO" id="GO:0005694">
    <property type="term" value="C:chromosome"/>
    <property type="evidence" value="ECO:0007669"/>
    <property type="project" value="UniProtKB-SubCell"/>
</dbReference>
<dbReference type="GO" id="GO:0005730">
    <property type="term" value="C:nucleolus"/>
    <property type="evidence" value="ECO:0000314"/>
    <property type="project" value="WormBase"/>
</dbReference>
<dbReference type="GO" id="GO:0005634">
    <property type="term" value="C:nucleus"/>
    <property type="evidence" value="ECO:0000314"/>
    <property type="project" value="WormBase"/>
</dbReference>
<dbReference type="GO" id="GO:0031616">
    <property type="term" value="C:spindle pole centrosome"/>
    <property type="evidence" value="ECO:0000314"/>
    <property type="project" value="WormBase"/>
</dbReference>
<dbReference type="GO" id="GO:0003677">
    <property type="term" value="F:DNA binding"/>
    <property type="evidence" value="ECO:0007669"/>
    <property type="project" value="UniProtKB-KW"/>
</dbReference>
<dbReference type="GO" id="GO:0003917">
    <property type="term" value="F:DNA topoisomerase type I (single strand cut, ATP-independent) activity"/>
    <property type="evidence" value="ECO:0000314"/>
    <property type="project" value="WormBase"/>
</dbReference>
<dbReference type="GO" id="GO:0007059">
    <property type="term" value="P:chromosome segregation"/>
    <property type="evidence" value="ECO:0000318"/>
    <property type="project" value="GO_Central"/>
</dbReference>
<dbReference type="GO" id="GO:0006260">
    <property type="term" value="P:DNA replication"/>
    <property type="evidence" value="ECO:0000318"/>
    <property type="project" value="GO_Central"/>
</dbReference>
<dbReference type="GO" id="GO:0006265">
    <property type="term" value="P:DNA topological change"/>
    <property type="evidence" value="ECO:0000318"/>
    <property type="project" value="GO_Central"/>
</dbReference>
<dbReference type="CDD" id="cd00659">
    <property type="entry name" value="Topo_IB_C"/>
    <property type="match status" value="1"/>
</dbReference>
<dbReference type="CDD" id="cd03488">
    <property type="entry name" value="Topoisomer_IB_N_htopoI_like"/>
    <property type="match status" value="1"/>
</dbReference>
<dbReference type="FunFam" id="1.10.10.41:FF:000001">
    <property type="entry name" value="DNA topoisomerase I"/>
    <property type="match status" value="1"/>
</dbReference>
<dbReference type="FunFam" id="1.10.132.10:FF:000009">
    <property type="entry name" value="DNA topoisomerase I"/>
    <property type="match status" value="1"/>
</dbReference>
<dbReference type="FunFam" id="2.170.11.10:FF:000001">
    <property type="entry name" value="DNA topoisomerase I"/>
    <property type="match status" value="1"/>
</dbReference>
<dbReference type="FunFam" id="3.90.15.10:FF:000001">
    <property type="entry name" value="DNA topoisomerase I"/>
    <property type="match status" value="1"/>
</dbReference>
<dbReference type="Gene3D" id="1.10.132.10">
    <property type="match status" value="1"/>
</dbReference>
<dbReference type="Gene3D" id="2.170.11.10">
    <property type="entry name" value="DNA Topoisomerase I, domain 2"/>
    <property type="match status" value="1"/>
</dbReference>
<dbReference type="Gene3D" id="3.90.15.10">
    <property type="entry name" value="Topoisomerase I, Chain A, domain 3"/>
    <property type="match status" value="1"/>
</dbReference>
<dbReference type="Gene3D" id="1.10.10.41">
    <property type="entry name" value="Yeast DNA topoisomerase - domain 1"/>
    <property type="match status" value="1"/>
</dbReference>
<dbReference type="InterPro" id="IPR011010">
    <property type="entry name" value="DNA_brk_join_enz"/>
</dbReference>
<dbReference type="InterPro" id="IPR013034">
    <property type="entry name" value="DNA_topo_DNA_db_N_dom1"/>
</dbReference>
<dbReference type="InterPro" id="IPR013030">
    <property type="entry name" value="DNA_topo_DNA_db_N_dom2"/>
</dbReference>
<dbReference type="InterPro" id="IPR001631">
    <property type="entry name" value="TopoI"/>
</dbReference>
<dbReference type="InterPro" id="IPR025834">
    <property type="entry name" value="TopoI_C_dom"/>
</dbReference>
<dbReference type="InterPro" id="IPR014711">
    <property type="entry name" value="TopoI_cat_a-hlx-sub_euk"/>
</dbReference>
<dbReference type="InterPro" id="IPR014727">
    <property type="entry name" value="TopoI_cat_a/b-sub_euk"/>
</dbReference>
<dbReference type="InterPro" id="IPR013500">
    <property type="entry name" value="TopoI_cat_euk"/>
</dbReference>
<dbReference type="InterPro" id="IPR008336">
    <property type="entry name" value="TopoI_DNA-bd_euk"/>
</dbReference>
<dbReference type="InterPro" id="IPR036202">
    <property type="entry name" value="TopoI_DNA-bd_euk_N_sf"/>
</dbReference>
<dbReference type="InterPro" id="IPR013499">
    <property type="entry name" value="TopoI_euk"/>
</dbReference>
<dbReference type="InterPro" id="IPR018521">
    <property type="entry name" value="TopoIB_AS"/>
</dbReference>
<dbReference type="InterPro" id="IPR048045">
    <property type="entry name" value="Topoisomer_I_DNA-bd"/>
</dbReference>
<dbReference type="InterPro" id="IPR051062">
    <property type="entry name" value="Topoisomerase_IB"/>
</dbReference>
<dbReference type="PANTHER" id="PTHR10290:SF3">
    <property type="entry name" value="DNA TOPOISOMERASE 1"/>
    <property type="match status" value="1"/>
</dbReference>
<dbReference type="PANTHER" id="PTHR10290">
    <property type="entry name" value="DNA TOPOISOMERASE I"/>
    <property type="match status" value="1"/>
</dbReference>
<dbReference type="Pfam" id="PF14370">
    <property type="entry name" value="Topo_C_assoc"/>
    <property type="match status" value="1"/>
</dbReference>
<dbReference type="Pfam" id="PF01028">
    <property type="entry name" value="Topoisom_I"/>
    <property type="match status" value="1"/>
</dbReference>
<dbReference type="Pfam" id="PF02919">
    <property type="entry name" value="Topoisom_I_N"/>
    <property type="match status" value="1"/>
</dbReference>
<dbReference type="PRINTS" id="PR00416">
    <property type="entry name" value="EUTPISMRASEI"/>
</dbReference>
<dbReference type="SMART" id="SM00435">
    <property type="entry name" value="TOPEUc"/>
    <property type="match status" value="1"/>
</dbReference>
<dbReference type="SUPFAM" id="SSF56349">
    <property type="entry name" value="DNA breaking-rejoining enzymes"/>
    <property type="match status" value="1"/>
</dbReference>
<dbReference type="SUPFAM" id="SSF46596">
    <property type="entry name" value="Eukaryotic DNA topoisomerase I, dispensable insert domain"/>
    <property type="match status" value="1"/>
</dbReference>
<dbReference type="SUPFAM" id="SSF56741">
    <property type="entry name" value="Eukaryotic DNA topoisomerase I, N-terminal DNA-binding fragment"/>
    <property type="match status" value="1"/>
</dbReference>
<dbReference type="PROSITE" id="PS00176">
    <property type="entry name" value="TOPO_IB_1"/>
    <property type="match status" value="1"/>
</dbReference>
<dbReference type="PROSITE" id="PS52038">
    <property type="entry name" value="TOPO_IB_2"/>
    <property type="match status" value="1"/>
</dbReference>
<name>TOP1_CAEEL</name>
<accession>O17966</accession>
<accession>O17965</accession>
<accession>Q27529</accession>
<reference key="1">
    <citation type="journal article" date="1996" name="Eur. J. Biochem.">
        <title>cDNA cloning, expression, and chromosomal localization of Caenorhabditis elegans DNA topoisomerase I.</title>
        <authorList>
            <person name="Kim J."/>
            <person name="Kim Y.-C."/>
            <person name="Lee J.H."/>
            <person name="Jang Y.J."/>
            <person name="Chung I.K."/>
            <person name="Koo H.-S."/>
        </authorList>
    </citation>
    <scope>NUCLEOTIDE SEQUENCE [MRNA] (ISOFORM A)</scope>
    <source>
        <strain>Bristol N2</strain>
    </source>
</reference>
<reference key="2">
    <citation type="journal article" date="1998" name="Biochim. Biophys. Acta">
        <title>Alternative splicing in the Caenorhabditis elegans DNA topoisomerase I gene.</title>
        <authorList>
            <person name="Lee M.H."/>
            <person name="Jang Y.J."/>
            <person name="Koo H.-S."/>
        </authorList>
    </citation>
    <scope>SEQUENCE REVISION</scope>
    <scope>ALTERNATIVE SPLICING</scope>
    <scope>DEVELOPMENTAL STAGE</scope>
    <source>
        <strain>Bristol N2</strain>
    </source>
</reference>
<reference key="3">
    <citation type="journal article" date="1998" name="Science">
        <title>Genome sequence of the nematode C. elegans: a platform for investigating biology.</title>
        <authorList>
            <consortium name="The C. elegans sequencing consortium"/>
        </authorList>
    </citation>
    <scope>NUCLEOTIDE SEQUENCE [LARGE SCALE GENOMIC DNA]</scope>
    <source>
        <strain>Bristol N2</strain>
    </source>
</reference>
<reference key="4">
    <citation type="journal article" date="2006" name="Nature">
        <title>Sperm chromatin proteomics identifies evolutionarily conserved fertility factors.</title>
        <authorList>
            <person name="Chu D.S."/>
            <person name="Liu H."/>
            <person name="Nix P."/>
            <person name="Wu T.F."/>
            <person name="Ralston E.J."/>
            <person name="Yates J.R. III"/>
            <person name="Meyer B.J."/>
        </authorList>
    </citation>
    <scope>FUNCTION</scope>
    <scope>SUBCELLULAR LOCATION</scope>
    <scope>TISSUE SPECIFICITY</scope>
    <scope>DEVELOPMENTAL STAGE</scope>
    <scope>DISRUPTION PHENOTYPE</scope>
</reference>
<comment type="function">
    <text evidence="3 7">Releases the supercoiling and torsional tension of DNA introduced during the DNA replication and transcription by transiently cleaving and rejoining one strand of the DNA duplex. Introduces a single-strand break via transesterification at a target site in duplex DNA. The scissile phosphodiester is attacked by the catalytic tyrosine of the enzyme, resulting in the formation of a DNA-(3'-phosphotyrosyl)-enzyme intermediate and the expulsion of a 5'-OH DNA strand. The free DNA strand then rotates around the intact phosphodiester bond on the opposing strand, thus removing DNA supercoils. Finally, in the religation step, the DNA 5'-OH attacks the covalent intermediate to expel the active-site tyrosine and restore the DNA phosphodiester backbone (By similarity). Required for normal spermatogenesis and oogenesis (PubMed:16943775).</text>
</comment>
<comment type="catalytic activity">
    <reaction evidence="5">
        <text>ATP-independent breakage of single-stranded DNA, followed by passage and rejoining.</text>
        <dbReference type="EC" id="5.6.2.1"/>
    </reaction>
</comment>
<comment type="subcellular location">
    <subcellularLocation>
        <location evidence="2">Nucleus</location>
    </subcellularLocation>
    <subcellularLocation>
        <location evidence="7">Nucleus</location>
        <location evidence="7">Nucleolus</location>
    </subcellularLocation>
    <subcellularLocation>
        <location evidence="7">Chromosome</location>
    </subcellularLocation>
    <text evidence="7">Localizes around sperm chromatids.</text>
</comment>
<comment type="alternative products">
    <event type="alternative splicing"/>
    <isoform>
        <id>O17966-1</id>
        <name>a</name>
        <sequence type="displayed"/>
    </isoform>
    <isoform>
        <id>O17966-2</id>
        <name>b</name>
        <sequence type="described" ref="VSP_033045"/>
    </isoform>
</comment>
<comment type="tissue specificity">
    <text evidence="7">Expressed in male germ cells and in mature sperm.</text>
</comment>
<comment type="developmental stage">
    <text evidence="7 8">Isoform a: only expressed in embryos (PubMed:9540836). Isoform b: present at all developmental stages (PubMed:9540836). Not expressed during spermatocyte meiosis (PubMed:16943775).</text>
</comment>
<comment type="disruption phenotype">
    <text evidence="7">RNAi-mediated knockdown causes abnormal gonad morphology, enlarged sperm nuclei and aberrant progression through meiosis. Oocytes appear to have undergone endomitotic reduplication.</text>
</comment>
<comment type="miscellaneous">
    <text evidence="1">Eukaryotic topoisomerase I and II can relax both negative and positive supercoils, whereas prokaryotic enzymes relax only negative supercoils.</text>
</comment>
<comment type="miscellaneous">
    <molecule>Isoform b</molecule>
    <text evidence="9">Predominant isoform.</text>
</comment>
<comment type="similarity">
    <text evidence="9">Belongs to the type IB topoisomerase family.</text>
</comment>
<gene>
    <name type="primary">top-1</name>
    <name type="ORF">M01E5.5</name>
</gene>
<sequence>MSVVSNHHSNGNGNSTVYDTNGNDEIKKEVKDEPMASDSEVPFGELMKRDKKEKKQKKRKAESGSDEDDYKPEKRKSSAKNGKKKDVGSDSEDDYKPEKKKSKKNNKKKAQESSEDDDEESEGDVSEEDVKPQIHSDDELEEEDEAPTTDDEEEQKRKEKERRKKEKREKKERKEKKRLEKENRKIKEEDDEDSDDEDDEKAKKKKRKSKGAEKSKPSTSKKDAGGKKEPPKKKVKKEEDIEDIWEWWKEEKKPAGVKWNSLQHCGPLFAPPYIPLPSHVHFKYGGEKMKLTLETEEIAQFYAGVLDHEYSTKEAFNKNFMKDWRKVMTVEERERIHDLKKCDFRAIDAYQKEQREIRKAMTKEEKLKIKEEKEAEVKIYGIAIIDGHRQKVANFRIEPPGVFRGRGGHPKMGLIKKRIMPEDVIINCGKDTEIPKPPPGHKWKEVRHDNTVTWLCSWTESVLGQNKYIMLNPSSKIKGEKDFEKYETARRLKKKIGGIRERYTDDFKSKEMRVRQRATALYFIDKLALRAGNEKDVDEAADTVGCCSLRVEHIKLFDSAKLNEDDKKEKEFVVEFDFLGKDSIRYFNRVSVEKRVYKNLKIFMEGKAPSDDLFDRLDTATLNDHLRSLMDGLTVKVFRTYNASITLQEQLIKLTNPKDNVAAKILSYNRANRQVAILCNHQRAVSKGFDESMQKLEQKIKDKKKEVKEAEAALKSARGAEKEKAQKKYDRLKEQLKKLKISRTDKDENKQIALGTSKLNYIDPRITVAWCKKFEVPLEKVFTKTHREKFRWAIDMTNSSDEEYVF</sequence>
<evidence type="ECO:0000250" key="1"/>
<evidence type="ECO:0000250" key="2">
    <source>
        <dbReference type="UniProtKB" id="P11387"/>
    </source>
</evidence>
<evidence type="ECO:0000250" key="3">
    <source>
        <dbReference type="UniProtKB" id="Q13472"/>
    </source>
</evidence>
<evidence type="ECO:0000255" key="4">
    <source>
        <dbReference type="PROSITE-ProRule" id="PRU01382"/>
    </source>
</evidence>
<evidence type="ECO:0000255" key="5">
    <source>
        <dbReference type="PROSITE-ProRule" id="PRU10130"/>
    </source>
</evidence>
<evidence type="ECO:0000256" key="6">
    <source>
        <dbReference type="SAM" id="MobiDB-lite"/>
    </source>
</evidence>
<evidence type="ECO:0000269" key="7">
    <source>
    </source>
</evidence>
<evidence type="ECO:0000269" key="8">
    <source>
    </source>
</evidence>
<evidence type="ECO:0000305" key="9"/>
<feature type="chain" id="PRO_0000330482" description="DNA topoisomerase 1">
    <location>
        <begin position="1"/>
        <end position="806"/>
    </location>
</feature>
<feature type="domain" description="Topo IB-type catalytic" evidence="4">
    <location>
        <begin position="474"/>
        <end position="803"/>
    </location>
</feature>
<feature type="region of interest" description="Disordered" evidence="6">
    <location>
        <begin position="1"/>
        <end position="236"/>
    </location>
</feature>
<feature type="region of interest" description="Interaction with DNA" evidence="1">
    <location>
        <begin position="467"/>
        <end position="468"/>
    </location>
</feature>
<feature type="region of interest" description="Interaction with DNA" evidence="1">
    <location>
        <begin position="530"/>
        <end position="535"/>
    </location>
</feature>
<feature type="region of interest" description="Interaction with DNA" evidence="1">
    <location>
        <begin position="634"/>
        <end position="636"/>
    </location>
</feature>
<feature type="compositionally biased region" description="Low complexity" evidence="6">
    <location>
        <begin position="1"/>
        <end position="15"/>
    </location>
</feature>
<feature type="compositionally biased region" description="Basic and acidic residues" evidence="6">
    <location>
        <begin position="24"/>
        <end position="34"/>
    </location>
</feature>
<feature type="compositionally biased region" description="Basic residues" evidence="6">
    <location>
        <begin position="49"/>
        <end position="60"/>
    </location>
</feature>
<feature type="compositionally biased region" description="Basic residues" evidence="6">
    <location>
        <begin position="98"/>
        <end position="108"/>
    </location>
</feature>
<feature type="compositionally biased region" description="Acidic residues" evidence="6">
    <location>
        <begin position="113"/>
        <end position="127"/>
    </location>
</feature>
<feature type="compositionally biased region" description="Basic and acidic residues" evidence="6">
    <location>
        <begin position="128"/>
        <end position="137"/>
    </location>
</feature>
<feature type="compositionally biased region" description="Acidic residues" evidence="6">
    <location>
        <begin position="138"/>
        <end position="153"/>
    </location>
</feature>
<feature type="compositionally biased region" description="Basic residues" evidence="6">
    <location>
        <begin position="159"/>
        <end position="176"/>
    </location>
</feature>
<feature type="compositionally biased region" description="Basic and acidic residues" evidence="6">
    <location>
        <begin position="177"/>
        <end position="188"/>
    </location>
</feature>
<feature type="compositionally biased region" description="Acidic residues" evidence="6">
    <location>
        <begin position="189"/>
        <end position="199"/>
    </location>
</feature>
<feature type="compositionally biased region" description="Basic and acidic residues" evidence="6">
    <location>
        <begin position="210"/>
        <end position="229"/>
    </location>
</feature>
<feature type="active site" description="O-(3'-phospho-DNA)-tyrosine intermediate" evidence="4 5">
    <location>
        <position position="761"/>
    </location>
</feature>
<feature type="site" description="Interaction with DNA" evidence="1">
    <location>
        <position position="358"/>
    </location>
</feature>
<feature type="site" description="Interaction with DNA" evidence="1">
    <location>
        <position position="406"/>
    </location>
</feature>
<feature type="site" description="Interaction with DNA" evidence="1">
    <location>
        <position position="454"/>
    </location>
</feature>
<feature type="site" description="Interaction with DNA" evidence="1">
    <location>
        <position position="485"/>
    </location>
</feature>
<feature type="site" description="Interaction with DNA" evidence="1">
    <location>
        <position position="543"/>
    </location>
</feature>
<feature type="site" description="Interaction with DNA" evidence="1">
    <location>
        <position position="581"/>
    </location>
</feature>
<feature type="site" description="Interaction with DNA" evidence="1">
    <location>
        <position position="623"/>
    </location>
</feature>
<feature type="site" description="Interaction with DNA" evidence="1">
    <location>
        <position position="681"/>
    </location>
</feature>
<feature type="site" description="Interaction with DNA" evidence="1">
    <location>
        <position position="699"/>
    </location>
</feature>
<feature type="splice variant" id="VSP_033045" description="In isoform b." evidence="9">
    <location>
        <begin position="134"/>
        <end position="205"/>
    </location>
</feature>
<feature type="sequence conflict" description="In Ref. 1; CAA65537." evidence="9" ref="1">
    <original>E</original>
    <variation>K</variation>
    <location>
        <position position="172"/>
    </location>
</feature>
<proteinExistence type="evidence at transcript level"/>
<keyword id="KW-0025">Alternative splicing</keyword>
<keyword id="KW-0158">Chromosome</keyword>
<keyword id="KW-0238">DNA-binding</keyword>
<keyword id="KW-0413">Isomerase</keyword>
<keyword id="KW-0539">Nucleus</keyword>
<keyword id="KW-1185">Reference proteome</keyword>
<keyword id="KW-0799">Topoisomerase</keyword>
<organism>
    <name type="scientific">Caenorhabditis elegans</name>
    <dbReference type="NCBI Taxonomy" id="6239"/>
    <lineage>
        <taxon>Eukaryota</taxon>
        <taxon>Metazoa</taxon>
        <taxon>Ecdysozoa</taxon>
        <taxon>Nematoda</taxon>
        <taxon>Chromadorea</taxon>
        <taxon>Rhabditida</taxon>
        <taxon>Rhabditina</taxon>
        <taxon>Rhabditomorpha</taxon>
        <taxon>Rhabditoidea</taxon>
        <taxon>Rhabditidae</taxon>
        <taxon>Peloderinae</taxon>
        <taxon>Caenorhabditis</taxon>
    </lineage>
</organism>
<protein>
    <recommendedName>
        <fullName>DNA topoisomerase 1</fullName>
        <ecNumber evidence="5">5.6.2.1</ecNumber>
    </recommendedName>
    <alternativeName>
        <fullName>DNA topoisomerase I</fullName>
        <shortName>topoI</shortName>
    </alternativeName>
</protein>